<keyword id="KW-0227">DNA damage</keyword>
<keyword id="KW-0234">DNA repair</keyword>
<keyword id="KW-0326">Glycosidase</keyword>
<keyword id="KW-0378">Hydrolase</keyword>
<keyword id="KW-0408">Iron</keyword>
<keyword id="KW-0411">Iron-sulfur</keyword>
<keyword id="KW-0479">Metal-binding</keyword>
<keyword id="KW-1185">Reference proteome</keyword>
<sequence length="230" mass="26446">MCSDLIPRGVDYTKFRDAIIKWYREFGEKDLPWRKAGDPWAVLVAALLLRKTTVKQVVDIYREFLRRYPSPARLADASVEEIKAIIQPLGMEHVRATLLKKLSEELVRRFNGQIPCDRDALKSLPGVGDYAASEVLLTACGKPEPLLDRNMIRVIERVFGIKSKKRRPHTDRELWNFARSLVPRDPELAKEFNFGVLDFARKVCTAKSPKCSLCPLANNVCVFYQKRERV</sequence>
<evidence type="ECO:0000250" key="1">
    <source>
        <dbReference type="UniProtKB" id="P83847"/>
    </source>
</evidence>
<evidence type="ECO:0000269" key="2">
    <source>
    </source>
</evidence>
<evidence type="ECO:0000303" key="3">
    <source>
    </source>
</evidence>
<evidence type="ECO:0000305" key="4"/>
<evidence type="ECO:0000312" key="5">
    <source>
        <dbReference type="EMBL" id="AAL64746.1"/>
    </source>
</evidence>
<name>MIG_PYRAE</name>
<gene>
    <name evidence="5" type="ordered locus">PAE3199</name>
</gene>
<reference key="1">
    <citation type="journal article" date="2000" name="J. Bacteriol.">
        <title>Characterization of a thermostable DNA glycosylase specific for U/G and T/G mismatches from the hyperthermophilic archaeon Pyrobaculum aerophilum.</title>
        <authorList>
            <person name="Yang H."/>
            <person name="Fitz-Gibbon S."/>
            <person name="Marcotte E.M."/>
            <person name="Tai J.H."/>
            <person name="Hyman E.C."/>
            <person name="Miller J.H."/>
        </authorList>
    </citation>
    <scope>NUCLEOTIDE SEQUENCE [GENOMIC DNA]</scope>
    <scope>FUNCTION</scope>
    <scope>CATALYTIC ACTIVITY</scope>
    <scope>COFACTOR</scope>
</reference>
<reference key="2">
    <citation type="journal article" date="2002" name="Proc. Natl. Acad. Sci. U.S.A.">
        <title>Genome sequence of the hyperthermophilic crenarchaeon Pyrobaculum aerophilum.</title>
        <authorList>
            <person name="Fitz-Gibbon S.T."/>
            <person name="Ladner H."/>
            <person name="Kim U.-J."/>
            <person name="Stetter K.O."/>
            <person name="Simon M.I."/>
            <person name="Miller J.H."/>
        </authorList>
    </citation>
    <scope>NUCLEOTIDE SEQUENCE [LARGE SCALE GENOMIC DNA]</scope>
    <source>
        <strain>ATCC 51768 / DSM 7523 / JCM 9630 / CIP 104966 / NBRC 100827 / IM2</strain>
    </source>
</reference>
<comment type="function">
    <text evidence="2">DNA glycosylase that excises thymine from T/G mismatches and uracil from U/G mismatches. Can also process T/GO and U/GO, but not A/G, T/C and U/C. Has weak AP lyase activity.</text>
</comment>
<comment type="catalytic activity">
    <reaction evidence="2">
        <text>Hydrolyzes mismatched double-stranded DNA and polynucleotides, releasing free thymine.</text>
        <dbReference type="EC" id="3.2.2.29"/>
    </reaction>
</comment>
<comment type="cofactor">
    <cofactor evidence="2">
        <name>[4Fe-4S] cluster</name>
        <dbReference type="ChEBI" id="CHEBI:49883"/>
    </cofactor>
    <text evidence="1">Binds 1 [4Fe-4S] cluster. The cluster has a structural role.</text>
</comment>
<comment type="similarity">
    <text evidence="4">Belongs to the Nth/MutY family.</text>
</comment>
<accession>Q7LX22</accession>
<accession>Q9P9L6</accession>
<proteinExistence type="evidence at protein level"/>
<feature type="chain" id="PRO_0000449119" description="Thymine/uracil-DNA glycosylase">
    <location>
        <begin position="1"/>
        <end position="230"/>
    </location>
</feature>
<feature type="binding site" evidence="1">
    <location>
        <position position="204"/>
    </location>
    <ligand>
        <name>[4Fe-4S] cluster</name>
        <dbReference type="ChEBI" id="CHEBI:49883"/>
    </ligand>
</feature>
<feature type="binding site" evidence="1">
    <location>
        <position position="211"/>
    </location>
    <ligand>
        <name>[4Fe-4S] cluster</name>
        <dbReference type="ChEBI" id="CHEBI:49883"/>
    </ligand>
</feature>
<feature type="binding site" evidence="1">
    <location>
        <position position="214"/>
    </location>
    <ligand>
        <name>[4Fe-4S] cluster</name>
        <dbReference type="ChEBI" id="CHEBI:49883"/>
    </ligand>
</feature>
<feature type="binding site" evidence="1">
    <location>
        <position position="221"/>
    </location>
    <ligand>
        <name>[4Fe-4S] cluster</name>
        <dbReference type="ChEBI" id="CHEBI:49883"/>
    </ligand>
</feature>
<protein>
    <recommendedName>
        <fullName evidence="4">Thymine/uracil-DNA glycosylase</fullName>
        <ecNumber evidence="2">3.2.2.-</ecNumber>
        <ecNumber evidence="2">3.2.2.29</ecNumber>
    </recommendedName>
    <alternativeName>
        <fullName evidence="3">Pa-MIG</fullName>
    </alternativeName>
</protein>
<organism>
    <name type="scientific">Pyrobaculum aerophilum (strain ATCC 51768 / DSM 7523 / JCM 9630 / CIP 104966 / NBRC 100827 / IM2)</name>
    <dbReference type="NCBI Taxonomy" id="178306"/>
    <lineage>
        <taxon>Archaea</taxon>
        <taxon>Thermoproteota</taxon>
        <taxon>Thermoprotei</taxon>
        <taxon>Thermoproteales</taxon>
        <taxon>Thermoproteaceae</taxon>
        <taxon>Pyrobaculum</taxon>
    </lineage>
</organism>
<dbReference type="EC" id="3.2.2.-" evidence="2"/>
<dbReference type="EC" id="3.2.2.29" evidence="2"/>
<dbReference type="EMBL" id="AF222335">
    <property type="protein sequence ID" value="AAF37270.1"/>
    <property type="molecule type" value="Genomic_DNA"/>
</dbReference>
<dbReference type="EMBL" id="AE009441">
    <property type="protein sequence ID" value="AAL64746.1"/>
    <property type="molecule type" value="Genomic_DNA"/>
</dbReference>
<dbReference type="RefSeq" id="WP_011009214.1">
    <property type="nucleotide sequence ID" value="NC_003364.1"/>
</dbReference>
<dbReference type="SMR" id="Q7LX22"/>
<dbReference type="STRING" id="178306.PAE3199"/>
<dbReference type="EnsemblBacteria" id="AAL64746">
    <property type="protein sequence ID" value="AAL64746"/>
    <property type="gene ID" value="PAE3199"/>
</dbReference>
<dbReference type="GeneID" id="1463928"/>
<dbReference type="KEGG" id="pai:PAE3199"/>
<dbReference type="PATRIC" id="fig|178306.9.peg.2405"/>
<dbReference type="eggNOG" id="arCOG00462">
    <property type="taxonomic scope" value="Archaea"/>
</dbReference>
<dbReference type="HOGENOM" id="CLU_012862_2_1_2"/>
<dbReference type="InParanoid" id="Q7LX22"/>
<dbReference type="BRENDA" id="3.2.2.29">
    <property type="organism ID" value="5239"/>
</dbReference>
<dbReference type="Proteomes" id="UP000002439">
    <property type="component" value="Chromosome"/>
</dbReference>
<dbReference type="GO" id="GO:0051539">
    <property type="term" value="F:4 iron, 4 sulfur cluster binding"/>
    <property type="evidence" value="ECO:0007669"/>
    <property type="project" value="InterPro"/>
</dbReference>
<dbReference type="GO" id="GO:0141016">
    <property type="term" value="F:G/T mismatch-specific thymine-DNA glycosylase activity"/>
    <property type="evidence" value="ECO:0007669"/>
    <property type="project" value="UniProtKB-EC"/>
</dbReference>
<dbReference type="GO" id="GO:0046872">
    <property type="term" value="F:metal ion binding"/>
    <property type="evidence" value="ECO:0007669"/>
    <property type="project" value="UniProtKB-KW"/>
</dbReference>
<dbReference type="GO" id="GO:0006284">
    <property type="term" value="P:base-excision repair"/>
    <property type="evidence" value="ECO:0007669"/>
    <property type="project" value="InterPro"/>
</dbReference>
<dbReference type="CDD" id="cd00056">
    <property type="entry name" value="ENDO3c"/>
    <property type="match status" value="1"/>
</dbReference>
<dbReference type="FunFam" id="1.10.340.30:FF:000001">
    <property type="entry name" value="Endonuclease III"/>
    <property type="match status" value="1"/>
</dbReference>
<dbReference type="Gene3D" id="1.10.1670.10">
    <property type="entry name" value="Helix-hairpin-Helix base-excision DNA repair enzymes (C-terminal)"/>
    <property type="match status" value="1"/>
</dbReference>
<dbReference type="Gene3D" id="1.10.340.30">
    <property type="entry name" value="Hypothetical protein, domain 2"/>
    <property type="match status" value="1"/>
</dbReference>
<dbReference type="InterPro" id="IPR011257">
    <property type="entry name" value="DNA_glycosylase"/>
</dbReference>
<dbReference type="InterPro" id="IPR003651">
    <property type="entry name" value="Endonuclease3_FeS-loop_motif"/>
</dbReference>
<dbReference type="InterPro" id="IPR003265">
    <property type="entry name" value="HhH-GPD_domain"/>
</dbReference>
<dbReference type="InterPro" id="IPR023170">
    <property type="entry name" value="HhH_base_excis_C"/>
</dbReference>
<dbReference type="InterPro" id="IPR044298">
    <property type="entry name" value="MIG/MutY"/>
</dbReference>
<dbReference type="PANTHER" id="PTHR42944">
    <property type="entry name" value="ADENINE DNA GLYCOSYLASE"/>
    <property type="match status" value="1"/>
</dbReference>
<dbReference type="PANTHER" id="PTHR42944:SF1">
    <property type="entry name" value="ADENINE DNA GLYCOSYLASE"/>
    <property type="match status" value="1"/>
</dbReference>
<dbReference type="Pfam" id="PF10576">
    <property type="entry name" value="EndIII_4Fe-2S"/>
    <property type="match status" value="1"/>
</dbReference>
<dbReference type="Pfam" id="PF00730">
    <property type="entry name" value="HhH-GPD"/>
    <property type="match status" value="1"/>
</dbReference>
<dbReference type="PIRSF" id="PIRSF001435">
    <property type="entry name" value="Nth"/>
    <property type="match status" value="1"/>
</dbReference>
<dbReference type="SMART" id="SM00478">
    <property type="entry name" value="ENDO3c"/>
    <property type="match status" value="1"/>
</dbReference>
<dbReference type="SUPFAM" id="SSF48150">
    <property type="entry name" value="DNA-glycosylase"/>
    <property type="match status" value="1"/>
</dbReference>